<organism>
    <name type="scientific">Influenza A virus (strain A/Silky Chicken/Hong Kong/SF189/2001 H5N1 genotype A)</name>
    <dbReference type="NCBI Taxonomy" id="196430"/>
    <lineage>
        <taxon>Viruses</taxon>
        <taxon>Riboviria</taxon>
        <taxon>Orthornavirae</taxon>
        <taxon>Negarnaviricota</taxon>
        <taxon>Polyploviricotina</taxon>
        <taxon>Insthoviricetes</taxon>
        <taxon>Articulavirales</taxon>
        <taxon>Orthomyxoviridae</taxon>
        <taxon>Alphainfluenzavirus</taxon>
        <taxon>Alphainfluenzavirus influenzae</taxon>
        <taxon>Influenza A virus</taxon>
    </lineage>
</organism>
<proteinExistence type="inferred from homology"/>
<protein>
    <recommendedName>
        <fullName evidence="1">Hemagglutinin</fullName>
    </recommendedName>
    <component>
        <recommendedName>
            <fullName evidence="1">Hemagglutinin HA1 chain</fullName>
        </recommendedName>
    </component>
    <component>
        <recommendedName>
            <fullName evidence="1">Hemagglutinin HA2 chain</fullName>
        </recommendedName>
    </component>
</protein>
<accession>Q80A26</accession>
<organismHost>
    <name type="scientific">Aves</name>
    <dbReference type="NCBI Taxonomy" id="8782"/>
</organismHost>
<organismHost>
    <name type="scientific">Felis catus</name>
    <name type="common">Cat</name>
    <name type="synonym">Felis silvestris catus</name>
    <dbReference type="NCBI Taxonomy" id="9685"/>
</organismHost>
<organismHost>
    <name type="scientific">Homo sapiens</name>
    <name type="common">Human</name>
    <dbReference type="NCBI Taxonomy" id="9606"/>
</organismHost>
<organismHost>
    <name type="scientific">Panthera pardus</name>
    <name type="common">Leopard</name>
    <name type="synonym">Felis pardus</name>
    <dbReference type="NCBI Taxonomy" id="9691"/>
</organismHost>
<organismHost>
    <name type="scientific">Panthera tigris</name>
    <name type="common">Tiger</name>
    <dbReference type="NCBI Taxonomy" id="9694"/>
</organismHost>
<organismHost>
    <name type="scientific">Sus scrofa</name>
    <name type="common">Pig</name>
    <dbReference type="NCBI Taxonomy" id="9823"/>
</organismHost>
<evidence type="ECO:0000255" key="1">
    <source>
        <dbReference type="HAMAP-Rule" id="MF_04072"/>
    </source>
</evidence>
<dbReference type="EMBL" id="AF509021">
    <property type="protein sequence ID" value="AAO52864.1"/>
    <property type="molecule type" value="Genomic_DNA"/>
</dbReference>
<dbReference type="SMR" id="Q80A26"/>
<dbReference type="GlyCosmos" id="Q80A26">
    <property type="glycosylation" value="7 sites, No reported glycans"/>
</dbReference>
<dbReference type="GO" id="GO:0020002">
    <property type="term" value="C:host cell plasma membrane"/>
    <property type="evidence" value="ECO:0007669"/>
    <property type="project" value="UniProtKB-SubCell"/>
</dbReference>
<dbReference type="GO" id="GO:0016020">
    <property type="term" value="C:membrane"/>
    <property type="evidence" value="ECO:0007669"/>
    <property type="project" value="UniProtKB-KW"/>
</dbReference>
<dbReference type="GO" id="GO:0019031">
    <property type="term" value="C:viral envelope"/>
    <property type="evidence" value="ECO:0007669"/>
    <property type="project" value="UniProtKB-KW"/>
</dbReference>
<dbReference type="GO" id="GO:0055036">
    <property type="term" value="C:virion membrane"/>
    <property type="evidence" value="ECO:0007669"/>
    <property type="project" value="UniProtKB-SubCell"/>
</dbReference>
<dbReference type="GO" id="GO:0046789">
    <property type="term" value="F:host cell surface receptor binding"/>
    <property type="evidence" value="ECO:0007669"/>
    <property type="project" value="InterPro"/>
</dbReference>
<dbReference type="GO" id="GO:0075512">
    <property type="term" value="P:clathrin-dependent endocytosis of virus by host cell"/>
    <property type="evidence" value="ECO:0007669"/>
    <property type="project" value="UniProtKB-KW"/>
</dbReference>
<dbReference type="GO" id="GO:0039654">
    <property type="term" value="P:fusion of virus membrane with host endosome membrane"/>
    <property type="evidence" value="ECO:0007669"/>
    <property type="project" value="UniProtKB-KW"/>
</dbReference>
<dbReference type="GO" id="GO:0019064">
    <property type="term" value="P:fusion of virus membrane with host plasma membrane"/>
    <property type="evidence" value="ECO:0007669"/>
    <property type="project" value="InterPro"/>
</dbReference>
<dbReference type="GO" id="GO:0019062">
    <property type="term" value="P:virion attachment to host cell"/>
    <property type="evidence" value="ECO:0007669"/>
    <property type="project" value="UniProtKB-KW"/>
</dbReference>
<dbReference type="FunFam" id="3.90.209.20:FF:000001">
    <property type="entry name" value="Hemagglutinin"/>
    <property type="match status" value="1"/>
</dbReference>
<dbReference type="Gene3D" id="3.90.20.10">
    <property type="match status" value="1"/>
</dbReference>
<dbReference type="Gene3D" id="3.90.209.20">
    <property type="match status" value="1"/>
</dbReference>
<dbReference type="Gene3D" id="2.10.77.10">
    <property type="entry name" value="Hemagglutinin Chain A, Domain 2"/>
    <property type="match status" value="1"/>
</dbReference>
<dbReference type="HAMAP" id="MF_04072">
    <property type="entry name" value="INFV_HEMA"/>
    <property type="match status" value="1"/>
</dbReference>
<dbReference type="InterPro" id="IPR008980">
    <property type="entry name" value="Capsid_hemagglutn"/>
</dbReference>
<dbReference type="InterPro" id="IPR013828">
    <property type="entry name" value="Hemagglutn_HA1_a/b_dom_sf"/>
</dbReference>
<dbReference type="InterPro" id="IPR000149">
    <property type="entry name" value="Hemagglutn_influenz_A"/>
</dbReference>
<dbReference type="InterPro" id="IPR001364">
    <property type="entry name" value="Hemagglutn_influenz_A/B"/>
</dbReference>
<dbReference type="Pfam" id="PF00509">
    <property type="entry name" value="Hemagglutinin"/>
    <property type="match status" value="1"/>
</dbReference>
<dbReference type="PRINTS" id="PR00330">
    <property type="entry name" value="HEMAGGLUTN1"/>
</dbReference>
<dbReference type="PRINTS" id="PR00329">
    <property type="entry name" value="HEMAGGLUTN12"/>
</dbReference>
<dbReference type="SUPFAM" id="SSF58064">
    <property type="entry name" value="Influenza hemagglutinin (stalk)"/>
    <property type="match status" value="1"/>
</dbReference>
<dbReference type="SUPFAM" id="SSF49818">
    <property type="entry name" value="Viral protein domain"/>
    <property type="match status" value="1"/>
</dbReference>
<comment type="function">
    <text evidence="1">Binds to sialic acid-containing receptors on the cell surface, bringing about the attachment of the virus particle to the cell. This attachment induces virion internalization either through clathrin-dependent endocytosis or through clathrin- and caveolin-independent pathway. Plays a major role in the determination of host range restriction and virulence. Class I viral fusion protein. Responsible for penetration of the virus into the cell cytoplasm by mediating the fusion of the membrane of the endocytosed virus particle with the endosomal membrane. Low pH in endosomes induces an irreversible conformational change in HA2, releasing the fusion hydrophobic peptide. Several trimers are required to form a competent fusion pore.</text>
</comment>
<comment type="subunit">
    <text evidence="1">Homotrimer of disulfide-linked HA1-HA2.</text>
</comment>
<comment type="subcellular location">
    <subcellularLocation>
        <location evidence="1">Virion membrane</location>
        <topology evidence="1">Single-pass type I membrane protein</topology>
    </subcellularLocation>
    <subcellularLocation>
        <location evidence="1">Host apical cell membrane</location>
        <topology evidence="1">Single-pass type I membrane protein</topology>
    </subcellularLocation>
    <text evidence="1">Targeted to the apical plasma membrane in epithelial polarized cells through a signal present in the transmembrane domain. Associated with glycosphingolipid- and cholesterol-enriched detergent-resistant lipid rafts.</text>
</comment>
<comment type="PTM">
    <text evidence="1">Palmitoylated.</text>
</comment>
<comment type="PTM">
    <text evidence="1">In natural infection, inactive HA is matured into HA1 and HA2 outside the cell by one or more trypsin-like, arginine-specific endoprotease secreted by the bronchial epithelial cells. One identified protease that may be involved in this process is secreted in lungs by club cells.</text>
</comment>
<comment type="miscellaneous">
    <text>Major glycoprotein, comprises over 80% of the envelope proteins present in virus particle.</text>
</comment>
<comment type="miscellaneous">
    <text>The extent of infection into host organism is determined by HA. Influenza viruses bud from the apical surface of polarized epithelial cells (e.g. bronchial epithelial cells) into lumen of lungs and are therefore usually pneumotropic. The reason is that HA is cleaved by tryptase clara which is restricted to lungs. However, HAs of H5 and H7 pantropic avian viruses subtypes can be cleaved by furin and subtilisin-type enzymes, allowing the virus to grow in other organs than lungs.</text>
</comment>
<comment type="miscellaneous">
    <text>The influenza A genome consist of 8 RNA segments. Genetic variation of hemagglutinin and/or neuraminidase genes results in the emergence of new influenza strains. The mechanism of variation can be the result of point mutations or the result of genetic reassortment between segments of two different strains.</text>
</comment>
<comment type="similarity">
    <text evidence="1">Belongs to the influenza viruses hemagglutinin family.</text>
</comment>
<feature type="chain" id="PRO_0000440801" description="Hemagglutinin HA1 chain" evidence="1">
    <location>
        <begin position="1"/>
        <end position="335"/>
    </location>
</feature>
<feature type="chain" id="PRO_0000310874" description="Hemagglutinin HA2 chain" evidence="1">
    <location>
        <begin position="336"/>
        <end position="557"/>
    </location>
</feature>
<feature type="topological domain" description="Extracellular" evidence="1">
    <location>
        <begin position="1"/>
        <end position="520"/>
    </location>
</feature>
<feature type="transmembrane region" description="Helical" evidence="1">
    <location>
        <begin position="521"/>
        <end position="541"/>
    </location>
</feature>
<feature type="topological domain" description="Cytoplasmic" evidence="1">
    <location>
        <begin position="542"/>
        <end position="557"/>
    </location>
</feature>
<feature type="site" description="Cleavage; by host" evidence="1">
    <location>
        <begin position="335"/>
        <end position="336"/>
    </location>
</feature>
<feature type="lipid moiety-binding region" description="S-palmitoyl cysteine; by host" evidence="1">
    <location>
        <position position="546"/>
    </location>
</feature>
<feature type="lipid moiety-binding region" description="S-palmitoyl cysteine; by host" evidence="1">
    <location>
        <position position="553"/>
    </location>
</feature>
<feature type="lipid moiety-binding region" description="S-palmitoyl cysteine; by host" evidence="1">
    <location>
        <position position="556"/>
    </location>
</feature>
<feature type="glycosylation site" description="N-linked (GlcNAc...) asparagine; by host" evidence="1">
    <location>
        <position position="15"/>
    </location>
</feature>
<feature type="glycosylation site" description="N-linked (GlcNAc...) asparagine; by host" evidence="1">
    <location>
        <position position="16"/>
    </location>
</feature>
<feature type="glycosylation site" description="N-linked (GlcNAc...) asparagine; by host" evidence="1">
    <location>
        <position position="28"/>
    </location>
</feature>
<feature type="glycosylation site" description="N-linked (GlcNAc...) asparagine; by host" evidence="1">
    <location>
        <position position="159"/>
    </location>
</feature>
<feature type="glycosylation site" description="N-linked (GlcNAc...) asparagine; by host" evidence="1">
    <location>
        <position position="170"/>
    </location>
</feature>
<feature type="glycosylation site" description="N-linked (GlcNAc...) asparagine; by host" evidence="1">
    <location>
        <position position="291"/>
    </location>
</feature>
<feature type="glycosylation site" description="N-linked (GlcNAc...) asparagine; by host" evidence="1">
    <location>
        <position position="489"/>
    </location>
</feature>
<feature type="disulfide bond" description="Interchain (between HA1 and HA2 chains)" evidence="1">
    <location>
        <begin position="9"/>
        <end position="472"/>
    </location>
</feature>
<feature type="disulfide bond" evidence="1">
    <location>
        <begin position="47"/>
        <end position="279"/>
    </location>
</feature>
<feature type="disulfide bond" evidence="1">
    <location>
        <begin position="60"/>
        <end position="72"/>
    </location>
</feature>
<feature type="disulfide bond" evidence="1">
    <location>
        <begin position="95"/>
        <end position="140"/>
    </location>
</feature>
<feature type="disulfide bond" evidence="1">
    <location>
        <begin position="283"/>
        <end position="307"/>
    </location>
</feature>
<feature type="disulfide bond" evidence="1">
    <location>
        <begin position="479"/>
        <end position="483"/>
    </location>
</feature>
<feature type="non-terminal residue">
    <location>
        <position position="1"/>
    </location>
</feature>
<reference key="1">
    <citation type="journal article" date="2002" name="Proc. Natl. Acad. Sci. U.S.A.">
        <title>Emergence of multiple genotypes of H5N1 avian influenza viruses in Hong Kong SAR.</title>
        <authorList>
            <person name="Guan Y."/>
            <person name="Peiris J.S.M."/>
            <person name="Lipatov A.S."/>
            <person name="Ellis T.M."/>
            <person name="Dyrting K.C."/>
            <person name="Krauss S."/>
            <person name="Zhang L.J."/>
            <person name="Webster R.G."/>
            <person name="Shortridge K.F."/>
        </authorList>
    </citation>
    <scope>NUCLEOTIDE SEQUENCE [GENOMIC RNA]</scope>
</reference>
<gene>
    <name evidence="1" type="primary">HA</name>
</gene>
<keyword id="KW-1167">Clathrin- and caveolin-independent endocytosis of virus by host</keyword>
<keyword id="KW-1165">Clathrin-mediated endocytosis of virus by host</keyword>
<keyword id="KW-1015">Disulfide bond</keyword>
<keyword id="KW-1170">Fusion of virus membrane with host endosomal membrane</keyword>
<keyword id="KW-1168">Fusion of virus membrane with host membrane</keyword>
<keyword id="KW-0325">Glycoprotein</keyword>
<keyword id="KW-0348">Hemagglutinin</keyword>
<keyword id="KW-1032">Host cell membrane</keyword>
<keyword id="KW-1043">Host membrane</keyword>
<keyword id="KW-0945">Host-virus interaction</keyword>
<keyword id="KW-0449">Lipoprotein</keyword>
<keyword id="KW-0472">Membrane</keyword>
<keyword id="KW-0564">Palmitate</keyword>
<keyword id="KW-0812">Transmembrane</keyword>
<keyword id="KW-1133">Transmembrane helix</keyword>
<keyword id="KW-1161">Viral attachment to host cell</keyword>
<keyword id="KW-0261">Viral envelope protein</keyword>
<keyword id="KW-1162">Viral penetration into host cytoplasm</keyword>
<keyword id="KW-0946">Virion</keyword>
<keyword id="KW-1164">Virus endocytosis by host</keyword>
<keyword id="KW-1160">Virus entry into host cell</keyword>
<sequence length="557" mass="63027">SLVKSDQICIGYHANNSTEQVDTIMEKNVTVTHAQDILEKTHNGKLCDLDGVKPLILRDCSVAGWLLGNPMCDEFINVPEWSYIVEKASPANDLCYPGDFNDYEELKHLLSRINHFEKIQIIPKSSWSNHEASSGVSSACPYLGKSSFFRNVVWLIKKNSTYPTIKRSYNNTNQEDLLVLWGIHHPNDAAEQTKLYQNPTTYISVGTSTLNQRLVPKIATRSKVNGQSGRMEFFWTILKPNDAINFESNGNFIAPEYAYKIVKKGDSAIMKSELEYGNCNTKCQTPMGAINSSMPFHNIHPLTIGECPKYVKSNRLVLATGLRNTPQRERRRKKRGLFGAIAGFIEGGWQGMVDGWYGYHHSNEQGSGYAADKESTQKAIDGVTNKVNSIIDKMNTQFEAVGREFNNLERRIENLNKKMEDGFLDVWTYNAELLVLMENERTLDFHDSNVKNLYDKVRLQLRDNAKELGNGCFEFYHKCDNECMESVKNGTYDYPQYSEEARLNREEISGVKLESMGTYQILSIYSTVASSLALAIMVAGLSLWMCSNGSLQCRICI</sequence>
<name>HEMA_I01A0</name>